<reference key="1">
    <citation type="journal article" date="2013" name="Nature">
        <title>The zebrafish reference genome sequence and its relationship to the human genome.</title>
        <authorList>
            <person name="Howe K."/>
            <person name="Clark M.D."/>
            <person name="Torroja C.F."/>
            <person name="Torrance J."/>
            <person name="Berthelot C."/>
            <person name="Muffato M."/>
            <person name="Collins J.E."/>
            <person name="Humphray S."/>
            <person name="McLaren K."/>
            <person name="Matthews L."/>
            <person name="McLaren S."/>
            <person name="Sealy I."/>
            <person name="Caccamo M."/>
            <person name="Churcher C."/>
            <person name="Scott C."/>
            <person name="Barrett J.C."/>
            <person name="Koch R."/>
            <person name="Rauch G.J."/>
            <person name="White S."/>
            <person name="Chow W."/>
            <person name="Kilian B."/>
            <person name="Quintais L.T."/>
            <person name="Guerra-Assuncao J.A."/>
            <person name="Zhou Y."/>
            <person name="Gu Y."/>
            <person name="Yen J."/>
            <person name="Vogel J.H."/>
            <person name="Eyre T."/>
            <person name="Redmond S."/>
            <person name="Banerjee R."/>
            <person name="Chi J."/>
            <person name="Fu B."/>
            <person name="Langley E."/>
            <person name="Maguire S.F."/>
            <person name="Laird G.K."/>
            <person name="Lloyd D."/>
            <person name="Kenyon E."/>
            <person name="Donaldson S."/>
            <person name="Sehra H."/>
            <person name="Almeida-King J."/>
            <person name="Loveland J."/>
            <person name="Trevanion S."/>
            <person name="Jones M."/>
            <person name="Quail M."/>
            <person name="Willey D."/>
            <person name="Hunt A."/>
            <person name="Burton J."/>
            <person name="Sims S."/>
            <person name="McLay K."/>
            <person name="Plumb B."/>
            <person name="Davis J."/>
            <person name="Clee C."/>
            <person name="Oliver K."/>
            <person name="Clark R."/>
            <person name="Riddle C."/>
            <person name="Elliot D."/>
            <person name="Threadgold G."/>
            <person name="Harden G."/>
            <person name="Ware D."/>
            <person name="Begum S."/>
            <person name="Mortimore B."/>
            <person name="Kerry G."/>
            <person name="Heath P."/>
            <person name="Phillimore B."/>
            <person name="Tracey A."/>
            <person name="Corby N."/>
            <person name="Dunn M."/>
            <person name="Johnson C."/>
            <person name="Wood J."/>
            <person name="Clark S."/>
            <person name="Pelan S."/>
            <person name="Griffiths G."/>
            <person name="Smith M."/>
            <person name="Glithero R."/>
            <person name="Howden P."/>
            <person name="Barker N."/>
            <person name="Lloyd C."/>
            <person name="Stevens C."/>
            <person name="Harley J."/>
            <person name="Holt K."/>
            <person name="Panagiotidis G."/>
            <person name="Lovell J."/>
            <person name="Beasley H."/>
            <person name="Henderson C."/>
            <person name="Gordon D."/>
            <person name="Auger K."/>
            <person name="Wright D."/>
            <person name="Collins J."/>
            <person name="Raisen C."/>
            <person name="Dyer L."/>
            <person name="Leung K."/>
            <person name="Robertson L."/>
            <person name="Ambridge K."/>
            <person name="Leongamornlert D."/>
            <person name="McGuire S."/>
            <person name="Gilderthorp R."/>
            <person name="Griffiths C."/>
            <person name="Manthravadi D."/>
            <person name="Nichol S."/>
            <person name="Barker G."/>
            <person name="Whitehead S."/>
            <person name="Kay M."/>
            <person name="Brown J."/>
            <person name="Murnane C."/>
            <person name="Gray E."/>
            <person name="Humphries M."/>
            <person name="Sycamore N."/>
            <person name="Barker D."/>
            <person name="Saunders D."/>
            <person name="Wallis J."/>
            <person name="Babbage A."/>
            <person name="Hammond S."/>
            <person name="Mashreghi-Mohammadi M."/>
            <person name="Barr L."/>
            <person name="Martin S."/>
            <person name="Wray P."/>
            <person name="Ellington A."/>
            <person name="Matthews N."/>
            <person name="Ellwood M."/>
            <person name="Woodmansey R."/>
            <person name="Clark G."/>
            <person name="Cooper J."/>
            <person name="Tromans A."/>
            <person name="Grafham D."/>
            <person name="Skuce C."/>
            <person name="Pandian R."/>
            <person name="Andrews R."/>
            <person name="Harrison E."/>
            <person name="Kimberley A."/>
            <person name="Garnett J."/>
            <person name="Fosker N."/>
            <person name="Hall R."/>
            <person name="Garner P."/>
            <person name="Kelly D."/>
            <person name="Bird C."/>
            <person name="Palmer S."/>
            <person name="Gehring I."/>
            <person name="Berger A."/>
            <person name="Dooley C.M."/>
            <person name="Ersan-Urun Z."/>
            <person name="Eser C."/>
            <person name="Geiger H."/>
            <person name="Geisler M."/>
            <person name="Karotki L."/>
            <person name="Kirn A."/>
            <person name="Konantz J."/>
            <person name="Konantz M."/>
            <person name="Oberlander M."/>
            <person name="Rudolph-Geiger S."/>
            <person name="Teucke M."/>
            <person name="Lanz C."/>
            <person name="Raddatz G."/>
            <person name="Osoegawa K."/>
            <person name="Zhu B."/>
            <person name="Rapp A."/>
            <person name="Widaa S."/>
            <person name="Langford C."/>
            <person name="Yang F."/>
            <person name="Schuster S.C."/>
            <person name="Carter N.P."/>
            <person name="Harrow J."/>
            <person name="Ning Z."/>
            <person name="Herrero J."/>
            <person name="Searle S.M."/>
            <person name="Enright A."/>
            <person name="Geisler R."/>
            <person name="Plasterk R.H."/>
            <person name="Lee C."/>
            <person name="Westerfield M."/>
            <person name="de Jong P.J."/>
            <person name="Zon L.I."/>
            <person name="Postlethwait J.H."/>
            <person name="Nusslein-Volhard C."/>
            <person name="Hubbard T.J."/>
            <person name="Roest Crollius H."/>
            <person name="Rogers J."/>
            <person name="Stemple D.L."/>
        </authorList>
    </citation>
    <scope>NUCLEOTIDE SEQUENCE [LARGE SCALE GENOMIC DNA]</scope>
    <source>
        <strain>Tuebingen</strain>
    </source>
</reference>
<reference key="2">
    <citation type="submission" date="2004-07" db="EMBL/GenBank/DDBJ databases">
        <authorList>
            <consortium name="NIH - Zebrafish Gene Collection (ZGC) project"/>
        </authorList>
    </citation>
    <scope>NUCLEOTIDE SEQUENCE [LARGE SCALE MRNA]</scope>
    <source>
        <tissue>Embryo</tissue>
    </source>
</reference>
<name>UFC1_DANRE</name>
<accession>Q6DEN0</accession>
<keyword id="KW-1185">Reference proteome</keyword>
<keyword id="KW-0833">Ubl conjugation pathway</keyword>
<comment type="function">
    <text evidence="1">E2-like enzyme which specifically catalyzes the second step in ufmylation. Accepts the ubiquitin-like modifier UFM1 from the E1 enzyme UBA5 and forms an intermediate with UFM1 via a thioester linkage. Ufmylation is involved in various processes, such as ribosome recycling, response to DNA damage, interferon response or reticulophagy (also called ER-phagy).</text>
</comment>
<comment type="subunit">
    <text evidence="1">Interacts with UBA5 (via C-terminus). Interacts with UFL1. Interacts with UFM1.</text>
</comment>
<comment type="similarity">
    <text evidence="2">Belongs to the ubiquitin-conjugating enzyme family. UFC1 subfamily.</text>
</comment>
<dbReference type="EMBL" id="BX901896">
    <property type="protein sequence ID" value="CAN88582.1"/>
    <property type="molecule type" value="Genomic_DNA"/>
</dbReference>
<dbReference type="EMBL" id="BC077079">
    <property type="protein sequence ID" value="AAH77079.1"/>
    <property type="molecule type" value="mRNA"/>
</dbReference>
<dbReference type="RefSeq" id="NP_001003650.1">
    <property type="nucleotide sequence ID" value="NM_001003650.1"/>
</dbReference>
<dbReference type="SMR" id="Q6DEN0"/>
<dbReference type="FunCoup" id="Q6DEN0">
    <property type="interactions" value="1802"/>
</dbReference>
<dbReference type="STRING" id="7955.ENSDARP00000036899"/>
<dbReference type="PaxDb" id="7955-ENSDARP00000036899"/>
<dbReference type="Ensembl" id="ENSDART00000037181">
    <property type="protein sequence ID" value="ENSDARP00000036899"/>
    <property type="gene ID" value="ENSDARG00000022340"/>
</dbReference>
<dbReference type="Ensembl" id="ENSDART00000182860">
    <property type="protein sequence ID" value="ENSDARP00000154921"/>
    <property type="gene ID" value="ENSDARG00000022340"/>
</dbReference>
<dbReference type="GeneID" id="445256"/>
<dbReference type="KEGG" id="dre:445256"/>
<dbReference type="AGR" id="ZFIN:ZDB-GENE-040801-268"/>
<dbReference type="CTD" id="51506"/>
<dbReference type="ZFIN" id="ZDB-GENE-040801-268">
    <property type="gene designation" value="ufc1"/>
</dbReference>
<dbReference type="eggNOG" id="KOG3357">
    <property type="taxonomic scope" value="Eukaryota"/>
</dbReference>
<dbReference type="HOGENOM" id="CLU_101170_0_0_1"/>
<dbReference type="InParanoid" id="Q6DEN0"/>
<dbReference type="OMA" id="LWQKNVP"/>
<dbReference type="OrthoDB" id="10256182at2759"/>
<dbReference type="PhylomeDB" id="Q6DEN0"/>
<dbReference type="TreeFam" id="TF313587"/>
<dbReference type="PRO" id="PR:Q6DEN0"/>
<dbReference type="Proteomes" id="UP000000437">
    <property type="component" value="Chromosome 5"/>
</dbReference>
<dbReference type="Bgee" id="ENSDARG00000022340">
    <property type="expression patterns" value="Expressed in swim bladder and 28 other cell types or tissues"/>
</dbReference>
<dbReference type="GO" id="GO:0061657">
    <property type="term" value="F:UFM1 conjugating enzyme activity"/>
    <property type="evidence" value="ECO:0000250"/>
    <property type="project" value="UniProtKB"/>
</dbReference>
<dbReference type="GO" id="GO:0071568">
    <property type="term" value="F:UFM1 transferase activity"/>
    <property type="evidence" value="ECO:0000318"/>
    <property type="project" value="GO_Central"/>
</dbReference>
<dbReference type="GO" id="GO:0071569">
    <property type="term" value="P:protein ufmylation"/>
    <property type="evidence" value="ECO:0000250"/>
    <property type="project" value="UniProtKB"/>
</dbReference>
<dbReference type="GO" id="GO:0034976">
    <property type="term" value="P:response to endoplasmic reticulum stress"/>
    <property type="evidence" value="ECO:0000318"/>
    <property type="project" value="GO_Central"/>
</dbReference>
<dbReference type="GO" id="GO:0061709">
    <property type="term" value="P:reticulophagy"/>
    <property type="evidence" value="ECO:0000318"/>
    <property type="project" value="GO_Central"/>
</dbReference>
<dbReference type="CDD" id="cd11686">
    <property type="entry name" value="UBCc_UFC1"/>
    <property type="match status" value="1"/>
</dbReference>
<dbReference type="FunFam" id="3.10.110.10:FF:000042">
    <property type="entry name" value="Ubiquitin-fold modifier-conjugating enzyme 1"/>
    <property type="match status" value="1"/>
</dbReference>
<dbReference type="Gene3D" id="3.10.110.10">
    <property type="entry name" value="Ubiquitin Conjugating Enzyme"/>
    <property type="match status" value="1"/>
</dbReference>
<dbReference type="InterPro" id="IPR016135">
    <property type="entry name" value="UBQ-conjugating_enzyme/RWD"/>
</dbReference>
<dbReference type="InterPro" id="IPR014806">
    <property type="entry name" value="Ufc1"/>
</dbReference>
<dbReference type="PANTHER" id="PTHR12921">
    <property type="entry name" value="UBIQUITIN-FOLD MODIFIER-CONJUGATING ENZYME 1"/>
    <property type="match status" value="1"/>
</dbReference>
<dbReference type="PANTHER" id="PTHR12921:SF0">
    <property type="entry name" value="UBIQUITIN-FOLD MODIFIER-CONJUGATING ENZYME 1"/>
    <property type="match status" value="1"/>
</dbReference>
<dbReference type="Pfam" id="PF08694">
    <property type="entry name" value="UFC1"/>
    <property type="match status" value="1"/>
</dbReference>
<dbReference type="PIRSF" id="PIRSF008716">
    <property type="entry name" value="DUF1782"/>
    <property type="match status" value="1"/>
</dbReference>
<dbReference type="SUPFAM" id="SSF54495">
    <property type="entry name" value="UBC-like"/>
    <property type="match status" value="1"/>
</dbReference>
<organism>
    <name type="scientific">Danio rerio</name>
    <name type="common">Zebrafish</name>
    <name type="synonym">Brachydanio rerio</name>
    <dbReference type="NCBI Taxonomy" id="7955"/>
    <lineage>
        <taxon>Eukaryota</taxon>
        <taxon>Metazoa</taxon>
        <taxon>Chordata</taxon>
        <taxon>Craniata</taxon>
        <taxon>Vertebrata</taxon>
        <taxon>Euteleostomi</taxon>
        <taxon>Actinopterygii</taxon>
        <taxon>Neopterygii</taxon>
        <taxon>Teleostei</taxon>
        <taxon>Ostariophysi</taxon>
        <taxon>Cypriniformes</taxon>
        <taxon>Danionidae</taxon>
        <taxon>Danioninae</taxon>
        <taxon>Danio</taxon>
    </lineage>
</organism>
<sequence>MADEATRKAVSEIPLLKTNSGPRDKELWVQRLREEYLALIKYVENNKAADNDWFRLESNKEGTRWFGKCWYIHELLKYEFDMEFDIPVTYPATAPEVAIPELDGKTAKMYRGGKICLTDHFKPLWARNVPKFGLAHLMALGLGPWLAVEIPDLIAKGLIQHKDQNS</sequence>
<gene>
    <name type="primary">ufc1</name>
    <name type="ORF">dkey-71l1.2</name>
    <name type="ORF">zgc:100800</name>
</gene>
<protein>
    <recommendedName>
        <fullName>Ubiquitin-fold modifier-conjugating enzyme 1</fullName>
    </recommendedName>
    <alternativeName>
        <fullName>Ufm1-conjugating enzyme 1</fullName>
    </alternativeName>
</protein>
<evidence type="ECO:0000250" key="1">
    <source>
        <dbReference type="UniProtKB" id="Q9Y3C8"/>
    </source>
</evidence>
<evidence type="ECO:0000305" key="2"/>
<feature type="chain" id="PRO_0000391955" description="Ubiquitin-fold modifier-conjugating enzyme 1">
    <location>
        <begin position="1"/>
        <end position="166"/>
    </location>
</feature>
<feature type="active site" description="Glycyl thioester intermediate" evidence="1">
    <location>
        <position position="116"/>
    </location>
</feature>
<proteinExistence type="evidence at transcript level"/>